<comment type="function">
    <text evidence="4">May not function as an oxygen storage or transport protein, but might act as an oxygen sensor or play a role in electron transfer, possibly to a bound oxygen molecule.</text>
</comment>
<comment type="similarity">
    <text evidence="2">Belongs to the plant globin family.</text>
</comment>
<sequence length="9" mass="961">VFEIAPSAK</sequence>
<dbReference type="GO" id="GO:0046872">
    <property type="term" value="F:metal ion binding"/>
    <property type="evidence" value="ECO:0007669"/>
    <property type="project" value="UniProtKB-KW"/>
</dbReference>
<feature type="chain" id="PRO_0000397962" description="Non-symbiotic hemoglobin">
    <location>
        <begin position="1" status="less than"/>
        <end position="9" status="greater than"/>
    </location>
</feature>
<feature type="non-terminal residue" evidence="3">
    <location>
        <position position="1"/>
    </location>
</feature>
<feature type="non-terminal residue" evidence="3">
    <location>
        <position position="9"/>
    </location>
</feature>
<evidence type="ECO:0000250" key="1">
    <source>
        <dbReference type="UniProtKB" id="Q9M593"/>
    </source>
</evidence>
<evidence type="ECO:0000255" key="2"/>
<evidence type="ECO:0000303" key="3">
    <source>
    </source>
</evidence>
<evidence type="ECO:0000305" key="4"/>
<proteinExistence type="evidence at protein level"/>
<reference evidence="4" key="1">
    <citation type="journal article" date="2008" name="J. Proteomics">
        <title>A proteomics approach to identify proteins differentially expressed in Douglas-fir seedlings infected by Phellinus sulphurascens.</title>
        <authorList>
            <person name="Islam M.A."/>
            <person name="Sturrock R.N."/>
            <person name="Ekramoddoullah A.K.M."/>
        </authorList>
    </citation>
    <scope>IDENTIFICATION BY MASS SPECTROMETRY</scope>
</reference>
<organism>
    <name type="scientific">Pseudotsuga menziesii</name>
    <name type="common">Douglas-fir</name>
    <name type="synonym">Abies menziesii</name>
    <dbReference type="NCBI Taxonomy" id="3357"/>
    <lineage>
        <taxon>Eukaryota</taxon>
        <taxon>Viridiplantae</taxon>
        <taxon>Streptophyta</taxon>
        <taxon>Embryophyta</taxon>
        <taxon>Tracheophyta</taxon>
        <taxon>Spermatophyta</taxon>
        <taxon>Pinopsida</taxon>
        <taxon>Pinidae</taxon>
        <taxon>Conifers I</taxon>
        <taxon>Pinales</taxon>
        <taxon>Pinaceae</taxon>
        <taxon>Pseudotsuga</taxon>
    </lineage>
</organism>
<keyword id="KW-0349">Heme</keyword>
<keyword id="KW-0408">Iron</keyword>
<keyword id="KW-0479">Metal-binding</keyword>
<accession>P85943</accession>
<name>HBL_PSEMZ</name>
<protein>
    <recommendedName>
        <fullName evidence="1">Non-symbiotic hemoglobin</fullName>
    </recommendedName>
</protein>